<organism>
    <name type="scientific">Prochlorococcus marinus (strain MIT 9515)</name>
    <dbReference type="NCBI Taxonomy" id="167542"/>
    <lineage>
        <taxon>Bacteria</taxon>
        <taxon>Bacillati</taxon>
        <taxon>Cyanobacteriota</taxon>
        <taxon>Cyanophyceae</taxon>
        <taxon>Synechococcales</taxon>
        <taxon>Prochlorococcaceae</taxon>
        <taxon>Prochlorococcus</taxon>
    </lineage>
</organism>
<sequence>MTQLSSNDVPSMGRRQFMNLLTFGTATGVALGALYPVANYFMPLRAGGGGGGTSAKDELGNPVTKTGWLANHQAGDRSLVQGLKGDPTYLIVNSEGDIGEFGLNAICTHLGCVVPWDSGANKFICPCHGSQYDTNGKVVRGPAPLSLALAHVDVDDDAVLVKQWSETDFRTNENPWWA</sequence>
<protein>
    <recommendedName>
        <fullName evidence="1">Cytochrome b6-f complex iron-sulfur subunit</fullName>
        <ecNumber evidence="1">7.1.1.6</ecNumber>
    </recommendedName>
    <alternativeName>
        <fullName evidence="1">Plastohydroquinone:plastocyanin oxidoreductase iron-sulfur protein</fullName>
        <shortName evidence="1">ISP</shortName>
        <shortName evidence="1">RISP</shortName>
    </alternativeName>
    <alternativeName>
        <fullName evidence="1">Rieske iron-sulfur protein</fullName>
    </alternativeName>
</protein>
<reference key="1">
    <citation type="journal article" date="2007" name="PLoS Genet.">
        <title>Patterns and implications of gene gain and loss in the evolution of Prochlorococcus.</title>
        <authorList>
            <person name="Kettler G.C."/>
            <person name="Martiny A.C."/>
            <person name="Huang K."/>
            <person name="Zucker J."/>
            <person name="Coleman M.L."/>
            <person name="Rodrigue S."/>
            <person name="Chen F."/>
            <person name="Lapidus A."/>
            <person name="Ferriera S."/>
            <person name="Johnson J."/>
            <person name="Steglich C."/>
            <person name="Church G.M."/>
            <person name="Richardson P."/>
            <person name="Chisholm S.W."/>
        </authorList>
    </citation>
    <scope>NUCLEOTIDE SEQUENCE [LARGE SCALE GENOMIC DNA]</scope>
    <source>
        <strain>MIT 9515</strain>
    </source>
</reference>
<comment type="function">
    <text evidence="1">Component of the cytochrome b6-f complex, which mediates electron transfer between photosystem II (PSII) and photosystem I (PSI), cyclic electron flow around PSI, and state transitions.</text>
</comment>
<comment type="catalytic activity">
    <reaction evidence="1">
        <text>2 oxidized [plastocyanin] + a plastoquinol + 2 H(+)(in) = 2 reduced [plastocyanin] + a plastoquinone + 4 H(+)(out)</text>
        <dbReference type="Rhea" id="RHEA:22148"/>
        <dbReference type="Rhea" id="RHEA-COMP:9561"/>
        <dbReference type="Rhea" id="RHEA-COMP:9562"/>
        <dbReference type="Rhea" id="RHEA-COMP:10039"/>
        <dbReference type="Rhea" id="RHEA-COMP:10040"/>
        <dbReference type="ChEBI" id="CHEBI:15378"/>
        <dbReference type="ChEBI" id="CHEBI:17757"/>
        <dbReference type="ChEBI" id="CHEBI:29036"/>
        <dbReference type="ChEBI" id="CHEBI:49552"/>
        <dbReference type="ChEBI" id="CHEBI:62192"/>
        <dbReference type="EC" id="7.1.1.6"/>
    </reaction>
</comment>
<comment type="cofactor">
    <cofactor evidence="1">
        <name>[2Fe-2S] cluster</name>
        <dbReference type="ChEBI" id="CHEBI:190135"/>
    </cofactor>
    <text evidence="1">Binds 1 [2Fe-2S] cluster per subunit.</text>
</comment>
<comment type="subunit">
    <text evidence="1">The 4 large subunits of the cytochrome b6-f complex are cytochrome b6, subunit IV (17 kDa polypeptide, PetD), cytochrome f and the Rieske protein, while the 4 small subunits are PetG, PetL, PetM and PetN. The complex functions as a dimer.</text>
</comment>
<comment type="subcellular location">
    <subcellularLocation>
        <location evidence="1">Cellular thylakoid membrane</location>
        <topology evidence="1">Single-pass membrane protein</topology>
    </subcellularLocation>
    <text evidence="1">The transmembrane helix obliquely spans the membrane in one monomer, and its extrinsic C-terminal domain is part of the other monomer.</text>
</comment>
<comment type="miscellaneous">
    <text>The Rieske iron-sulfur protein is a high potential 2Fe-2S protein.</text>
</comment>
<comment type="similarity">
    <text evidence="1">Belongs to the Rieske iron-sulfur protein family.</text>
</comment>
<gene>
    <name evidence="1" type="primary">petC</name>
    <name type="ordered locus">P9515_05261</name>
</gene>
<dbReference type="EC" id="7.1.1.6" evidence="1"/>
<dbReference type="EMBL" id="CP000552">
    <property type="protein sequence ID" value="ABM71735.1"/>
    <property type="molecule type" value="Genomic_DNA"/>
</dbReference>
<dbReference type="RefSeq" id="WP_011819843.1">
    <property type="nucleotide sequence ID" value="NC_008817.1"/>
</dbReference>
<dbReference type="SMR" id="A2BVC4"/>
<dbReference type="STRING" id="167542.P9515_05261"/>
<dbReference type="GeneID" id="60200622"/>
<dbReference type="KEGG" id="pmc:P9515_05261"/>
<dbReference type="eggNOG" id="COG0723">
    <property type="taxonomic scope" value="Bacteria"/>
</dbReference>
<dbReference type="HOGENOM" id="CLU_055690_8_0_3"/>
<dbReference type="OrthoDB" id="9767869at2"/>
<dbReference type="Proteomes" id="UP000001589">
    <property type="component" value="Chromosome"/>
</dbReference>
<dbReference type="GO" id="GO:0031676">
    <property type="term" value="C:plasma membrane-derived thylakoid membrane"/>
    <property type="evidence" value="ECO:0007669"/>
    <property type="project" value="UniProtKB-SubCell"/>
</dbReference>
<dbReference type="GO" id="GO:0051537">
    <property type="term" value="F:2 iron, 2 sulfur cluster binding"/>
    <property type="evidence" value="ECO:0007669"/>
    <property type="project" value="UniProtKB-KW"/>
</dbReference>
<dbReference type="GO" id="GO:0045158">
    <property type="term" value="F:electron transporter, transferring electrons within cytochrome b6/f complex of photosystem II activity"/>
    <property type="evidence" value="ECO:0007669"/>
    <property type="project" value="UniProtKB-UniRule"/>
</dbReference>
<dbReference type="GO" id="GO:0046872">
    <property type="term" value="F:metal ion binding"/>
    <property type="evidence" value="ECO:0007669"/>
    <property type="project" value="UniProtKB-KW"/>
</dbReference>
<dbReference type="GO" id="GO:0004497">
    <property type="term" value="F:monooxygenase activity"/>
    <property type="evidence" value="ECO:0007669"/>
    <property type="project" value="UniProtKB-ARBA"/>
</dbReference>
<dbReference type="GO" id="GO:0016705">
    <property type="term" value="F:oxidoreductase activity, acting on paired donors, with incorporation or reduction of molecular oxygen"/>
    <property type="evidence" value="ECO:0007669"/>
    <property type="project" value="UniProtKB-ARBA"/>
</dbReference>
<dbReference type="GO" id="GO:0009496">
    <property type="term" value="F:plastoquinol--plastocyanin reductase activity"/>
    <property type="evidence" value="ECO:0007669"/>
    <property type="project" value="UniProtKB-UniRule"/>
</dbReference>
<dbReference type="GO" id="GO:0015979">
    <property type="term" value="P:photosynthesis"/>
    <property type="evidence" value="ECO:0007669"/>
    <property type="project" value="UniProtKB-UniRule"/>
</dbReference>
<dbReference type="CDD" id="cd03471">
    <property type="entry name" value="Rieske_cytochrome_b6f"/>
    <property type="match status" value="1"/>
</dbReference>
<dbReference type="FunFam" id="2.102.10.10:FF:000007">
    <property type="entry name" value="Cytochrome b6-f complex iron-sulfur subunit"/>
    <property type="match status" value="1"/>
</dbReference>
<dbReference type="Gene3D" id="2.102.10.10">
    <property type="entry name" value="Rieske [2Fe-2S] iron-sulphur domain"/>
    <property type="match status" value="1"/>
</dbReference>
<dbReference type="Gene3D" id="1.20.5.700">
    <property type="entry name" value="Single helix bin"/>
    <property type="match status" value="1"/>
</dbReference>
<dbReference type="HAMAP" id="MF_01335">
    <property type="entry name" value="Cytb6_f_Rieske"/>
    <property type="match status" value="1"/>
</dbReference>
<dbReference type="InterPro" id="IPR023960">
    <property type="entry name" value="Cyt_b6_f_Rieske"/>
</dbReference>
<dbReference type="InterPro" id="IPR017941">
    <property type="entry name" value="Rieske_2Fe-2S"/>
</dbReference>
<dbReference type="InterPro" id="IPR036922">
    <property type="entry name" value="Rieske_2Fe-2S_sf"/>
</dbReference>
<dbReference type="InterPro" id="IPR014349">
    <property type="entry name" value="Rieske_Fe-S_prot"/>
</dbReference>
<dbReference type="InterPro" id="IPR005805">
    <property type="entry name" value="Rieske_Fe-S_prot_C"/>
</dbReference>
<dbReference type="InterPro" id="IPR006311">
    <property type="entry name" value="TAT_signal"/>
</dbReference>
<dbReference type="NCBIfam" id="NF045928">
    <property type="entry name" value="Cytb6fFeSPetC"/>
    <property type="match status" value="1"/>
</dbReference>
<dbReference type="NCBIfam" id="NF010001">
    <property type="entry name" value="PRK13474.1"/>
    <property type="match status" value="1"/>
</dbReference>
<dbReference type="PANTHER" id="PTHR10134">
    <property type="entry name" value="CYTOCHROME B-C1 COMPLEX SUBUNIT RIESKE, MITOCHONDRIAL"/>
    <property type="match status" value="1"/>
</dbReference>
<dbReference type="Pfam" id="PF00355">
    <property type="entry name" value="Rieske"/>
    <property type="match status" value="1"/>
</dbReference>
<dbReference type="Pfam" id="PF25471">
    <property type="entry name" value="TM_PetC"/>
    <property type="match status" value="1"/>
</dbReference>
<dbReference type="PRINTS" id="PR00162">
    <property type="entry name" value="RIESKE"/>
</dbReference>
<dbReference type="SUPFAM" id="SSF50022">
    <property type="entry name" value="ISP domain"/>
    <property type="match status" value="1"/>
</dbReference>
<dbReference type="PROSITE" id="PS51296">
    <property type="entry name" value="RIESKE"/>
    <property type="match status" value="1"/>
</dbReference>
<dbReference type="PROSITE" id="PS51318">
    <property type="entry name" value="TAT"/>
    <property type="match status" value="1"/>
</dbReference>
<feature type="chain" id="PRO_0000298459" description="Cytochrome b6-f complex iron-sulfur subunit">
    <location>
        <begin position="1"/>
        <end position="178"/>
    </location>
</feature>
<feature type="transmembrane region" description="Helical" evidence="1">
    <location>
        <begin position="20"/>
        <end position="42"/>
    </location>
</feature>
<feature type="domain" description="Rieske" evidence="1">
    <location>
        <begin position="65"/>
        <end position="161"/>
    </location>
</feature>
<feature type="binding site" evidence="1">
    <location>
        <position position="107"/>
    </location>
    <ligand>
        <name>[2Fe-2S] cluster</name>
        <dbReference type="ChEBI" id="CHEBI:190135"/>
    </ligand>
</feature>
<feature type="binding site" evidence="1">
    <location>
        <position position="109"/>
    </location>
    <ligand>
        <name>[2Fe-2S] cluster</name>
        <dbReference type="ChEBI" id="CHEBI:190135"/>
    </ligand>
</feature>
<feature type="binding site" evidence="1">
    <location>
        <position position="125"/>
    </location>
    <ligand>
        <name>[2Fe-2S] cluster</name>
        <dbReference type="ChEBI" id="CHEBI:190135"/>
    </ligand>
</feature>
<feature type="binding site" evidence="1">
    <location>
        <position position="128"/>
    </location>
    <ligand>
        <name>[2Fe-2S] cluster</name>
        <dbReference type="ChEBI" id="CHEBI:190135"/>
    </ligand>
</feature>
<feature type="disulfide bond" evidence="1">
    <location>
        <begin position="112"/>
        <end position="127"/>
    </location>
</feature>
<name>UCRI_PROM5</name>
<keyword id="KW-0001">2Fe-2S</keyword>
<keyword id="KW-1015">Disulfide bond</keyword>
<keyword id="KW-0249">Electron transport</keyword>
<keyword id="KW-0408">Iron</keyword>
<keyword id="KW-0411">Iron-sulfur</keyword>
<keyword id="KW-0472">Membrane</keyword>
<keyword id="KW-0479">Metal-binding</keyword>
<keyword id="KW-0793">Thylakoid</keyword>
<keyword id="KW-1278">Translocase</keyword>
<keyword id="KW-0812">Transmembrane</keyword>
<keyword id="KW-1133">Transmembrane helix</keyword>
<keyword id="KW-0813">Transport</keyword>
<proteinExistence type="inferred from homology"/>
<evidence type="ECO:0000255" key="1">
    <source>
        <dbReference type="HAMAP-Rule" id="MF_01335"/>
    </source>
</evidence>
<accession>A2BVC4</accession>